<protein>
    <recommendedName>
        <fullName evidence="1">Pyridine nucleotide-disulfide oxidoreductase domain-containing protein 2</fullName>
        <ecNumber>1.-.-.-</ecNumber>
    </recommendedName>
</protein>
<organism>
    <name type="scientific">Pongo abelii</name>
    <name type="common">Sumatran orangutan</name>
    <name type="synonym">Pongo pygmaeus abelii</name>
    <dbReference type="NCBI Taxonomy" id="9601"/>
    <lineage>
        <taxon>Eukaryota</taxon>
        <taxon>Metazoa</taxon>
        <taxon>Chordata</taxon>
        <taxon>Craniata</taxon>
        <taxon>Vertebrata</taxon>
        <taxon>Euteleostomi</taxon>
        <taxon>Mammalia</taxon>
        <taxon>Eutheria</taxon>
        <taxon>Euarchontoglires</taxon>
        <taxon>Primates</taxon>
        <taxon>Haplorrhini</taxon>
        <taxon>Catarrhini</taxon>
        <taxon>Hominidae</taxon>
        <taxon>Pongo</taxon>
    </lineage>
</organism>
<dbReference type="EC" id="1.-.-.-"/>
<dbReference type="EMBL" id="CR858970">
    <property type="protein sequence ID" value="CAH91165.1"/>
    <property type="molecule type" value="mRNA"/>
</dbReference>
<dbReference type="SMR" id="Q5RAP5"/>
<dbReference type="FunCoup" id="Q5RAP5">
    <property type="interactions" value="300"/>
</dbReference>
<dbReference type="STRING" id="9601.ENSPPYP00000002956"/>
<dbReference type="eggNOG" id="KOG4254">
    <property type="taxonomic scope" value="Eukaryota"/>
</dbReference>
<dbReference type="InParanoid" id="Q5RAP5"/>
<dbReference type="Proteomes" id="UP000001595">
    <property type="component" value="Unplaced"/>
</dbReference>
<dbReference type="GO" id="GO:0005759">
    <property type="term" value="C:mitochondrial matrix"/>
    <property type="evidence" value="ECO:0000250"/>
    <property type="project" value="UniProtKB"/>
</dbReference>
<dbReference type="GO" id="GO:0016491">
    <property type="term" value="F:oxidoreductase activity"/>
    <property type="evidence" value="ECO:0007669"/>
    <property type="project" value="UniProtKB-KW"/>
</dbReference>
<dbReference type="GO" id="GO:0007005">
    <property type="term" value="P:mitochondrion organization"/>
    <property type="evidence" value="ECO:0000250"/>
    <property type="project" value="UniProtKB"/>
</dbReference>
<dbReference type="Gene3D" id="3.50.50.60">
    <property type="entry name" value="FAD/NAD(P)-binding domain"/>
    <property type="match status" value="2"/>
</dbReference>
<dbReference type="InterPro" id="IPR002937">
    <property type="entry name" value="Amino_oxidase"/>
</dbReference>
<dbReference type="InterPro" id="IPR036188">
    <property type="entry name" value="FAD/NAD-bd_sf"/>
</dbReference>
<dbReference type="PANTHER" id="PTHR10668">
    <property type="entry name" value="PHYTOENE DEHYDROGENASE"/>
    <property type="match status" value="1"/>
</dbReference>
<dbReference type="PANTHER" id="PTHR10668:SF103">
    <property type="entry name" value="PYRIDINE NUCLEOTIDE-DISULFIDE OXIDOREDUCTASE DOMAIN-CONTAINING PROTEIN 2"/>
    <property type="match status" value="1"/>
</dbReference>
<dbReference type="Pfam" id="PF01593">
    <property type="entry name" value="Amino_oxidase"/>
    <property type="match status" value="1"/>
</dbReference>
<dbReference type="Pfam" id="PF13450">
    <property type="entry name" value="NAD_binding_8"/>
    <property type="match status" value="1"/>
</dbReference>
<dbReference type="SUPFAM" id="SSF51905">
    <property type="entry name" value="FAD/NAD(P)-binding domain"/>
    <property type="match status" value="1"/>
</dbReference>
<name>PYRD2_PONAB</name>
<accession>Q5RAP5</accession>
<feature type="chain" id="PRO_0000244073" description="Pyridine nucleotide-disulfide oxidoreductase domain-containing protein 2">
    <location>
        <begin position="1"/>
        <end position="581"/>
    </location>
</feature>
<feature type="binding site" evidence="2">
    <location>
        <begin position="38"/>
        <end position="71"/>
    </location>
    <ligand>
        <name>FAD</name>
        <dbReference type="ChEBI" id="CHEBI:57692"/>
    </ligand>
</feature>
<proteinExistence type="evidence at transcript level"/>
<reference key="1">
    <citation type="submission" date="2004-11" db="EMBL/GenBank/DDBJ databases">
        <authorList>
            <consortium name="The German cDNA consortium"/>
        </authorList>
    </citation>
    <scope>NUCLEOTIDE SEQUENCE [LARGE SCALE MRNA]</scope>
    <source>
        <tissue>Kidney</tissue>
    </source>
</reference>
<comment type="function">
    <text evidence="1">Probable oxidoreductase that may play a role as regulator of mitochondrial function.</text>
</comment>
<comment type="subunit">
    <text evidence="1">Interacts with COX5B; this interaction may contribute to localize PYROXD2 to the inner face of the inner mitochondrial membrane.</text>
</comment>
<comment type="subcellular location">
    <subcellularLocation>
        <location evidence="1">Mitochondrion matrix</location>
    </subcellularLocation>
    <text evidence="1">The import into mitochondria is dependent on TOMM40 and TIMM23.</text>
</comment>
<comment type="similarity">
    <text evidence="3">Belongs to the carotenoid/retinoid oxidoreductase family.</text>
</comment>
<keyword id="KW-0274">FAD</keyword>
<keyword id="KW-0285">Flavoprotein</keyword>
<keyword id="KW-0496">Mitochondrion</keyword>
<keyword id="KW-0560">Oxidoreductase</keyword>
<keyword id="KW-1185">Reference proteome</keyword>
<sequence>MAASGRGLRKAVAASPFPAWRRAHTEAGGGLKPEYDAVVIGAGHNGLVVAAYLQRLGVNTAVFERRHVIGGAAVTEEIIPGFKFSRASYLLSLLRPQIYTDLELKKHGLRLHLRNPYSFTPMLEEGAGSKVPRSLLLGTDMAENQKQIAQFSRKDAQVFPRYEEFMHRLALAIDPLLDAAPVDMAAFQRGSLLQRMRSFSTLKPLLKAGRILGAQLPRYYEVLTAPITKVLDQWFESEPLKATLATDAVIGAMTSPHTPGSGYVLLHHVMGGLEGMQGAWGYVQGGMGALSDAIASSATTHGASIFTEKTVAKVQVNSEGCVQGVVLEDGTEVRSKVVLSNTSPQITFLKLTPQEWLPEEFLERISQLDTRSPVTKINVAVDRLPSFLAAPNAPRGQPLPHHQCSIHLNCEDTLLLHQAFEDAMDGLPSHRPIIELCIPSSLDPPLAPSGCHVVSLFTQYTPYTLAGGKAWDEQERDAYADRVFDCVEVYAPGFKDSVVGRDILTPPDLERIFGLPGGNIFHCAMSLDQLYFARPVPLHSGYRCPLQGLYLCGSGAHPGGGVMGAAGRNAAHVAFRDLKSM</sequence>
<evidence type="ECO:0000250" key="1">
    <source>
        <dbReference type="UniProtKB" id="Q8N2H3"/>
    </source>
</evidence>
<evidence type="ECO:0000255" key="2"/>
<evidence type="ECO:0000305" key="3"/>
<gene>
    <name evidence="1" type="primary">PYROXD2</name>
</gene>